<gene>
    <name type="primary">nop10</name>
    <name type="ordered locus">MA_0643</name>
</gene>
<accession>Q8TT00</accession>
<evidence type="ECO:0000250" key="1"/>
<evidence type="ECO:0000305" key="2"/>
<protein>
    <recommendedName>
        <fullName>Ribosome biogenesis protein Nop10</fullName>
    </recommendedName>
</protein>
<name>NOP10_METAC</name>
<organism>
    <name type="scientific">Methanosarcina acetivorans (strain ATCC 35395 / DSM 2834 / JCM 12185 / C2A)</name>
    <dbReference type="NCBI Taxonomy" id="188937"/>
    <lineage>
        <taxon>Archaea</taxon>
        <taxon>Methanobacteriati</taxon>
        <taxon>Methanobacteriota</taxon>
        <taxon>Stenosarchaea group</taxon>
        <taxon>Methanomicrobia</taxon>
        <taxon>Methanosarcinales</taxon>
        <taxon>Methanosarcinaceae</taxon>
        <taxon>Methanosarcina</taxon>
    </lineage>
</organism>
<proteinExistence type="inferred from homology"/>
<comment type="function">
    <text evidence="1">Involved in ribosome biogenesis; more specifically in 18S rRNA pseudouridylation and in cleavage of pre-rRNA.</text>
</comment>
<comment type="similarity">
    <text evidence="2">Belongs to the NOP10 family.</text>
</comment>
<dbReference type="EMBL" id="AE010299">
    <property type="protein sequence ID" value="AAM04085.1"/>
    <property type="molecule type" value="Genomic_DNA"/>
</dbReference>
<dbReference type="RefSeq" id="WP_011020690.1">
    <property type="nucleotide sequence ID" value="NC_003552.1"/>
</dbReference>
<dbReference type="SMR" id="Q8TT00"/>
<dbReference type="FunCoup" id="Q8TT00">
    <property type="interactions" value="8"/>
</dbReference>
<dbReference type="STRING" id="188937.MA_0643"/>
<dbReference type="EnsemblBacteria" id="AAM04085">
    <property type="protein sequence ID" value="AAM04085"/>
    <property type="gene ID" value="MA_0643"/>
</dbReference>
<dbReference type="GeneID" id="32154379"/>
<dbReference type="KEGG" id="mac:MA_0643"/>
<dbReference type="HOGENOM" id="CLU_196480_1_0_2"/>
<dbReference type="InParanoid" id="Q8TT00"/>
<dbReference type="OrthoDB" id="7259at2157"/>
<dbReference type="PhylomeDB" id="Q8TT00"/>
<dbReference type="Proteomes" id="UP000002487">
    <property type="component" value="Chromosome"/>
</dbReference>
<dbReference type="GO" id="GO:1990904">
    <property type="term" value="C:ribonucleoprotein complex"/>
    <property type="evidence" value="ECO:0007669"/>
    <property type="project" value="UniProtKB-KW"/>
</dbReference>
<dbReference type="GO" id="GO:0030515">
    <property type="term" value="F:snoRNA binding"/>
    <property type="evidence" value="ECO:0007669"/>
    <property type="project" value="InterPro"/>
</dbReference>
<dbReference type="GO" id="GO:0001522">
    <property type="term" value="P:pseudouridine synthesis"/>
    <property type="evidence" value="ECO:0007669"/>
    <property type="project" value="InterPro"/>
</dbReference>
<dbReference type="GO" id="GO:0006364">
    <property type="term" value="P:rRNA processing"/>
    <property type="evidence" value="ECO:0007669"/>
    <property type="project" value="UniProtKB-UniRule"/>
</dbReference>
<dbReference type="Gene3D" id="2.20.28.40">
    <property type="entry name" value="H/ACA ribonucleoprotein complex, subunit Nop10"/>
    <property type="match status" value="1"/>
</dbReference>
<dbReference type="HAMAP" id="MF_00803">
    <property type="entry name" value="Nop10"/>
    <property type="match status" value="1"/>
</dbReference>
<dbReference type="InterPro" id="IPR007264">
    <property type="entry name" value="H/ACA_rnp_Nop10"/>
</dbReference>
<dbReference type="InterPro" id="IPR036756">
    <property type="entry name" value="H/ACA_rnp_Nop10_sf"/>
</dbReference>
<dbReference type="InterPro" id="IPR023532">
    <property type="entry name" value="Nop10_arc-typ"/>
</dbReference>
<dbReference type="NCBIfam" id="NF009623">
    <property type="entry name" value="PRK13130.1"/>
    <property type="match status" value="1"/>
</dbReference>
<dbReference type="PANTHER" id="PTHR13305:SF0">
    <property type="entry name" value="H_ACA RIBONUCLEOPROTEIN COMPLEX SUBUNIT 3"/>
    <property type="match status" value="1"/>
</dbReference>
<dbReference type="PANTHER" id="PTHR13305">
    <property type="entry name" value="RIBOSOME BIOGENESIS PROTEIN NOP10"/>
    <property type="match status" value="1"/>
</dbReference>
<dbReference type="Pfam" id="PF04135">
    <property type="entry name" value="Nop10p"/>
    <property type="match status" value="1"/>
</dbReference>
<dbReference type="SUPFAM" id="SSF144210">
    <property type="entry name" value="Nop10-like SnoRNP"/>
    <property type="match status" value="1"/>
</dbReference>
<keyword id="KW-1185">Reference proteome</keyword>
<keyword id="KW-0687">Ribonucleoprotein</keyword>
<keyword id="KW-0690">Ribosome biogenesis</keyword>
<keyword id="KW-0698">rRNA processing</keyword>
<reference key="1">
    <citation type="journal article" date="2002" name="Genome Res.">
        <title>The genome of Methanosarcina acetivorans reveals extensive metabolic and physiological diversity.</title>
        <authorList>
            <person name="Galagan J.E."/>
            <person name="Nusbaum C."/>
            <person name="Roy A."/>
            <person name="Endrizzi M.G."/>
            <person name="Macdonald P."/>
            <person name="FitzHugh W."/>
            <person name="Calvo S."/>
            <person name="Engels R."/>
            <person name="Smirnov S."/>
            <person name="Atnoor D."/>
            <person name="Brown A."/>
            <person name="Allen N."/>
            <person name="Naylor J."/>
            <person name="Stange-Thomann N."/>
            <person name="DeArellano K."/>
            <person name="Johnson R."/>
            <person name="Linton L."/>
            <person name="McEwan P."/>
            <person name="McKernan K."/>
            <person name="Talamas J."/>
            <person name="Tirrell A."/>
            <person name="Ye W."/>
            <person name="Zimmer A."/>
            <person name="Barber R.D."/>
            <person name="Cann I."/>
            <person name="Graham D.E."/>
            <person name="Grahame D.A."/>
            <person name="Guss A.M."/>
            <person name="Hedderich R."/>
            <person name="Ingram-Smith C."/>
            <person name="Kuettner H.C."/>
            <person name="Krzycki J.A."/>
            <person name="Leigh J.A."/>
            <person name="Li W."/>
            <person name="Liu J."/>
            <person name="Mukhopadhyay B."/>
            <person name="Reeve J.N."/>
            <person name="Smith K."/>
            <person name="Springer T.A."/>
            <person name="Umayam L.A."/>
            <person name="White O."/>
            <person name="White R.H."/>
            <person name="de Macario E.C."/>
            <person name="Ferry J.G."/>
            <person name="Jarrell K.F."/>
            <person name="Jing H."/>
            <person name="Macario A.J.L."/>
            <person name="Paulsen I.T."/>
            <person name="Pritchett M."/>
            <person name="Sowers K.R."/>
            <person name="Swanson R.V."/>
            <person name="Zinder S.H."/>
            <person name="Lander E."/>
            <person name="Metcalf W.W."/>
            <person name="Birren B."/>
        </authorList>
    </citation>
    <scope>NUCLEOTIDE SEQUENCE [LARGE SCALE GENOMIC DNA]</scope>
    <source>
        <strain>ATCC 35395 / DSM 2834 / JCM 12185 / C2A</strain>
    </source>
</reference>
<feature type="chain" id="PRO_0000149017" description="Ribosome biogenesis protein Nop10">
    <location>
        <begin position="1"/>
        <end position="51"/>
    </location>
</feature>
<sequence length="51" mass="5742">MGQKIRKCKNCGRYTLREKCPVCGGVTLPAIPARFSPQDPYGKYRRLAKKG</sequence>